<sequence>MAKFSALCSLALLGLATAQKPVGTETHEKLTTFRCTVAGGCVEKTNYIVLDSITGHRIYQPAAETLDCGARGAAPNVTACPTKEACAENCAMEGRTDYGSQGVSTDGASLRLQILHDGKKVAPRVYLLDETEAKYEMLRLTGNEFAFEVTMDKLPCGMNSALYLSEMEEDGGKSELNPGGAPWGTGYCDAQCYVTPFINGEGNIKGNGACCAEMDIWEANSRATHIAPHPCSKPGLYLCEGDECGSTGVCDKSGCAWNPNRIAQPHYYGNNDTFKVDTLKPMTVVTQFPTDASGKLAAIRRLYVQGGVVIKAETVHKAGLPEVDALTDPFCEAFGSQRYMALGATGGMGDALARGMVLVMSIWWDETGGNMQWLDGIASGSGPCNATEGAPANIPLVEPNPEVTFSNLKWGEIGSTFQGGARRL</sequence>
<dbReference type="EC" id="3.2.1.4" evidence="4"/>
<dbReference type="EMBL" id="CM001237">
    <property type="protein sequence ID" value="EHA46531.1"/>
    <property type="molecule type" value="Genomic_DNA"/>
</dbReference>
<dbReference type="RefSeq" id="XP_003721274.1">
    <property type="nucleotide sequence ID" value="XM_003721226.1"/>
</dbReference>
<dbReference type="SMR" id="G4NK46"/>
<dbReference type="STRING" id="242507.G4NK46"/>
<dbReference type="GlyCosmos" id="G4NK46">
    <property type="glycosylation" value="3 sites, No reported glycans"/>
</dbReference>
<dbReference type="EnsemblFungi" id="MGG_02532T0">
    <property type="protein sequence ID" value="MGG_02532T0"/>
    <property type="gene ID" value="MGG_02532"/>
</dbReference>
<dbReference type="GeneID" id="2682835"/>
<dbReference type="KEGG" id="mgr:MGG_02532"/>
<dbReference type="VEuPathDB" id="FungiDB:MGG_02532"/>
<dbReference type="eggNOG" id="ENOG502SJT6">
    <property type="taxonomic scope" value="Eukaryota"/>
</dbReference>
<dbReference type="HOGENOM" id="CLU_020817_0_1_1"/>
<dbReference type="InParanoid" id="G4NK46"/>
<dbReference type="OMA" id="VCCNEMD"/>
<dbReference type="OrthoDB" id="412382at2759"/>
<dbReference type="Proteomes" id="UP000009058">
    <property type="component" value="Chromosome 7"/>
</dbReference>
<dbReference type="GO" id="GO:0005576">
    <property type="term" value="C:extracellular region"/>
    <property type="evidence" value="ECO:0007669"/>
    <property type="project" value="UniProtKB-SubCell"/>
</dbReference>
<dbReference type="GO" id="GO:0008810">
    <property type="term" value="F:cellulase activity"/>
    <property type="evidence" value="ECO:0007669"/>
    <property type="project" value="UniProtKB-EC"/>
</dbReference>
<dbReference type="GO" id="GO:0030245">
    <property type="term" value="P:cellulose catabolic process"/>
    <property type="evidence" value="ECO:0007669"/>
    <property type="project" value="UniProtKB-KW"/>
</dbReference>
<dbReference type="CDD" id="cd07999">
    <property type="entry name" value="GH7_CBH_EG"/>
    <property type="match status" value="1"/>
</dbReference>
<dbReference type="Gene3D" id="2.70.100.10">
    <property type="entry name" value="Glycoside hydrolase, family 7, domain"/>
    <property type="match status" value="1"/>
</dbReference>
<dbReference type="InterPro" id="IPR013320">
    <property type="entry name" value="ConA-like_dom_sf"/>
</dbReference>
<dbReference type="InterPro" id="IPR001722">
    <property type="entry name" value="Glyco_hydro_7"/>
</dbReference>
<dbReference type="InterPro" id="IPR037019">
    <property type="entry name" value="Glyco_hydro_7_sf"/>
</dbReference>
<dbReference type="PANTHER" id="PTHR33753">
    <property type="entry name" value="1,4-BETA-D-GLUCAN CELLOBIOHYDROLASE B"/>
    <property type="match status" value="1"/>
</dbReference>
<dbReference type="PANTHER" id="PTHR33753:SF1">
    <property type="entry name" value="ENDO-BETA-1,4-GLUCANASE CELB"/>
    <property type="match status" value="1"/>
</dbReference>
<dbReference type="Pfam" id="PF00840">
    <property type="entry name" value="Glyco_hydro_7"/>
    <property type="match status" value="1"/>
</dbReference>
<dbReference type="PRINTS" id="PR00734">
    <property type="entry name" value="GLHYDRLASE7"/>
</dbReference>
<dbReference type="SUPFAM" id="SSF49899">
    <property type="entry name" value="Concanavalin A-like lectins/glucanases"/>
    <property type="match status" value="1"/>
</dbReference>
<gene>
    <name evidence="5" type="primary">egl1</name>
    <name type="ORF">MGG_02532</name>
</gene>
<accession>G4NK46</accession>
<proteinExistence type="evidence at protein level"/>
<comment type="function">
    <text evidence="4">Endoglucanase that is involved in the biological conversion of cellulose to glucose. Hydrolyzes internal beta-1,4-glucosidic bonds.</text>
</comment>
<comment type="catalytic activity">
    <reaction evidence="4">
        <text>Endohydrolysis of (1-&gt;4)-beta-D-glucosidic linkages in cellulose, lichenin and cereal beta-D-glucans.</text>
        <dbReference type="EC" id="3.2.1.4"/>
    </reaction>
</comment>
<comment type="subunit">
    <text evidence="1">Monomer.</text>
</comment>
<comment type="subcellular location">
    <subcellularLocation>
        <location evidence="4">Secreted</location>
    </subcellularLocation>
</comment>
<comment type="developmental stage">
    <text evidence="4">Expressed at all stages, however, the highest level appears in mycelia, followed by germinating spores, and the lowest in spores.</text>
</comment>
<comment type="induction">
    <text evidence="4">Expression is increased at 72 hour of infection, and then the expression level drops back to the lower level for the remainder of the time course.</text>
</comment>
<comment type="miscellaneous">
    <text evidence="6">The biological conversion of cellulose to glucose generally requires three types of hydrolytic enzymes: (1) Endoglucanases which cut internal beta-1,4-glucosidic bonds; (2) Exocellobiohydrolases that cut the disaccharide cellobiose from the non-reducing end of the cellulose polymer chain; (3) Beta-1,4-glucosidases which hydrolyze the cellobiose and other short cello-oligosaccharides to glucose.</text>
</comment>
<comment type="similarity">
    <text evidence="6">Belongs to the glycosyl hydrolase 7 (cellulase C) family.</text>
</comment>
<reference key="1">
    <citation type="journal article" date="2005" name="Nature">
        <title>The genome sequence of the rice blast fungus Magnaporthe grisea.</title>
        <authorList>
            <person name="Dean R.A."/>
            <person name="Talbot N.J."/>
            <person name="Ebbole D.J."/>
            <person name="Farman M.L."/>
            <person name="Mitchell T.K."/>
            <person name="Orbach M.J."/>
            <person name="Thon M.R."/>
            <person name="Kulkarni R."/>
            <person name="Xu J.-R."/>
            <person name="Pan H."/>
            <person name="Read N.D."/>
            <person name="Lee Y.-H."/>
            <person name="Carbone I."/>
            <person name="Brown D."/>
            <person name="Oh Y.Y."/>
            <person name="Donofrio N."/>
            <person name="Jeong J.S."/>
            <person name="Soanes D.M."/>
            <person name="Djonovic S."/>
            <person name="Kolomiets E."/>
            <person name="Rehmeyer C."/>
            <person name="Li W."/>
            <person name="Harding M."/>
            <person name="Kim S."/>
            <person name="Lebrun M.-H."/>
            <person name="Bohnert H."/>
            <person name="Coughlan S."/>
            <person name="Butler J."/>
            <person name="Calvo S.E."/>
            <person name="Ma L.-J."/>
            <person name="Nicol R."/>
            <person name="Purcell S."/>
            <person name="Nusbaum C."/>
            <person name="Galagan J.E."/>
            <person name="Birren B.W."/>
        </authorList>
    </citation>
    <scope>NUCLEOTIDE SEQUENCE [LARGE SCALE GENOMIC DNA]</scope>
    <source>
        <strain>70-15 / ATCC MYA-4617 / FGSC 8958</strain>
    </source>
</reference>
<reference key="2">
    <citation type="journal article" date="2008" name="Curr. Genet.">
        <title>Biochemical and molecular characterization of a putative endoglucanase in Magnaporthe grisea.</title>
        <authorList>
            <person name="Zhou J."/>
            <person name="Zheng X.Z."/>
            <person name="Lan L."/>
            <person name="Lin C.Z."/>
            <person name="Wu Y.B."/>
            <person name="Lin X.J."/>
            <person name="Ebbole D."/>
            <person name="Lu G.D."/>
            <person name="Wang Z.H."/>
        </authorList>
    </citation>
    <scope>FUNCTION</scope>
    <scope>CATALYTIC ACTIVITY</scope>
    <scope>INDUCTION</scope>
    <scope>DEVELOPMENTAL STAGE</scope>
    <scope>SUBCELLULAR LOCATION</scope>
</reference>
<feature type="signal peptide" evidence="2">
    <location>
        <begin position="1"/>
        <end position="18"/>
    </location>
</feature>
<feature type="chain" id="PRO_0000432715" description="Endoglucanase 1" evidence="2">
    <location>
        <begin position="19"/>
        <end position="424"/>
    </location>
</feature>
<feature type="active site" description="Nucleophile" evidence="1">
    <location>
        <position position="213"/>
    </location>
</feature>
<feature type="active site" description="Proton donor" evidence="1">
    <location>
        <position position="218"/>
    </location>
</feature>
<feature type="glycosylation site" description="N-linked (GlcNAc...) asparagine" evidence="3">
    <location>
        <position position="76"/>
    </location>
</feature>
<feature type="glycosylation site" description="N-linked (GlcNAc...) asparagine" evidence="3">
    <location>
        <position position="271"/>
    </location>
</feature>
<feature type="glycosylation site" description="N-linked (GlcNAc...) asparagine" evidence="3">
    <location>
        <position position="385"/>
    </location>
</feature>
<feature type="disulfide bond" evidence="1">
    <location>
        <begin position="35"/>
        <end position="41"/>
    </location>
</feature>
<feature type="disulfide bond" evidence="1">
    <location>
        <begin position="68"/>
        <end position="90"/>
    </location>
</feature>
<feature type="disulfide bond" evidence="1">
    <location>
        <begin position="80"/>
        <end position="86"/>
    </location>
</feature>
<feature type="disulfide bond" evidence="1">
    <location>
        <begin position="156"/>
        <end position="384"/>
    </location>
</feature>
<feature type="disulfide bond" evidence="1">
    <location>
        <begin position="188"/>
        <end position="211"/>
    </location>
</feature>
<feature type="disulfide bond" evidence="1">
    <location>
        <begin position="192"/>
        <end position="210"/>
    </location>
</feature>
<feature type="disulfide bond" evidence="1">
    <location>
        <begin position="231"/>
        <end position="250"/>
    </location>
</feature>
<feature type="disulfide bond" evidence="1">
    <location>
        <begin position="239"/>
        <end position="244"/>
    </location>
</feature>
<feature type="disulfide bond" evidence="1">
    <location>
        <begin position="255"/>
        <end position="331"/>
    </location>
</feature>
<keyword id="KW-0119">Carbohydrate metabolism</keyword>
<keyword id="KW-0136">Cellulose degradation</keyword>
<keyword id="KW-1015">Disulfide bond</keyword>
<keyword id="KW-0325">Glycoprotein</keyword>
<keyword id="KW-0326">Glycosidase</keyword>
<keyword id="KW-0378">Hydrolase</keyword>
<keyword id="KW-0624">Polysaccharide degradation</keyword>
<keyword id="KW-1185">Reference proteome</keyword>
<keyword id="KW-0964">Secreted</keyword>
<keyword id="KW-0732">Signal</keyword>
<organism>
    <name type="scientific">Pyricularia oryzae (strain 70-15 / ATCC MYA-4617 / FGSC 8958)</name>
    <name type="common">Rice blast fungus</name>
    <name type="synonym">Magnaporthe oryzae</name>
    <dbReference type="NCBI Taxonomy" id="242507"/>
    <lineage>
        <taxon>Eukaryota</taxon>
        <taxon>Fungi</taxon>
        <taxon>Dikarya</taxon>
        <taxon>Ascomycota</taxon>
        <taxon>Pezizomycotina</taxon>
        <taxon>Sordariomycetes</taxon>
        <taxon>Sordariomycetidae</taxon>
        <taxon>Magnaporthales</taxon>
        <taxon>Pyriculariaceae</taxon>
        <taxon>Pyricularia</taxon>
    </lineage>
</organism>
<evidence type="ECO:0000250" key="1">
    <source>
        <dbReference type="UniProtKB" id="P56680"/>
    </source>
</evidence>
<evidence type="ECO:0000255" key="2"/>
<evidence type="ECO:0000255" key="3">
    <source>
        <dbReference type="PROSITE-ProRule" id="PRU00498"/>
    </source>
</evidence>
<evidence type="ECO:0000269" key="4">
    <source>
    </source>
</evidence>
<evidence type="ECO:0000303" key="5">
    <source>
    </source>
</evidence>
<evidence type="ECO:0000305" key="6"/>
<protein>
    <recommendedName>
        <fullName evidence="5">Endoglucanase 1</fullName>
        <ecNumber evidence="4">3.2.1.4</ecNumber>
    </recommendedName>
    <alternativeName>
        <fullName evidence="6">Cellulase 1</fullName>
    </alternativeName>
    <alternativeName>
        <fullName evidence="6">Endo-1,4-beta-glucanase 1</fullName>
    </alternativeName>
</protein>
<name>CEL7B_PYRO7</name>